<keyword id="KW-0028">Amino-acid biosynthesis</keyword>
<keyword id="KW-0057">Aromatic amino acid biosynthesis</keyword>
<keyword id="KW-0328">Glycosyltransferase</keyword>
<keyword id="KW-0460">Magnesium</keyword>
<keyword id="KW-0479">Metal-binding</keyword>
<keyword id="KW-1185">Reference proteome</keyword>
<keyword id="KW-0808">Transferase</keyword>
<keyword id="KW-0822">Tryptophan biosynthesis</keyword>
<proteinExistence type="inferred from homology"/>
<comment type="function">
    <text evidence="1">Catalyzes the transfer of the phosphoribosyl group of 5-phosphorylribose-1-pyrophosphate (PRPP) to anthranilate to yield N-(5'-phosphoribosyl)-anthranilate (PRA).</text>
</comment>
<comment type="catalytic activity">
    <reaction evidence="1">
        <text>N-(5-phospho-beta-D-ribosyl)anthranilate + diphosphate = 5-phospho-alpha-D-ribose 1-diphosphate + anthranilate</text>
        <dbReference type="Rhea" id="RHEA:11768"/>
        <dbReference type="ChEBI" id="CHEBI:16567"/>
        <dbReference type="ChEBI" id="CHEBI:18277"/>
        <dbReference type="ChEBI" id="CHEBI:33019"/>
        <dbReference type="ChEBI" id="CHEBI:58017"/>
        <dbReference type="EC" id="2.4.2.18"/>
    </reaction>
</comment>
<comment type="cofactor">
    <cofactor evidence="1">
        <name>Mg(2+)</name>
        <dbReference type="ChEBI" id="CHEBI:18420"/>
    </cofactor>
    <text evidence="1">Binds 2 magnesium ions per monomer.</text>
</comment>
<comment type="pathway">
    <text evidence="1">Amino-acid biosynthesis; L-tryptophan biosynthesis; L-tryptophan from chorismate: step 2/5.</text>
</comment>
<comment type="subunit">
    <text evidence="1">Homodimer.</text>
</comment>
<comment type="similarity">
    <text evidence="1">Belongs to the anthranilate phosphoribosyltransferase family.</text>
</comment>
<sequence length="338" mass="36023">MNRFLQLCVDGKTLTAGEAETLMNMMMAAEMTPSEMGGILSILAHRGETPEELAGFVKAMRAHALTVDGLPDIVDTCGTGGDGISTFNISTASAIVASAAGAKIAKHGNRSVSSKSGSADVLEELEVSIQTTPEKVKSSIETNNMGFLFAPLYHSSMKHVAGTRKELGFRTVFNLLGPLSNPLQAKRQVIGVYSVEKAGLMASALETFQPKHVMFVSSRDGLDELSITAPTDVIELKDGERREYTVSPEDFGFTNGRLEDLQVQSPKESAYLIQNIFENKSSSSALSITAFNAGAAIYTAGITASLKEGTELALETITSGGAAAQLERLKQKEEEIYA</sequence>
<reference key="1">
    <citation type="journal article" date="1985" name="Gene">
        <title>Nucleotide sequence of the Bacillus subtilis tryptophan operon.</title>
        <authorList>
            <person name="Henner D.J."/>
            <person name="Band L."/>
            <person name="Shimotsu H."/>
        </authorList>
    </citation>
    <scope>NUCLEOTIDE SEQUENCE [GENOMIC DNA]</scope>
</reference>
<reference key="2">
    <citation type="journal article" date="1984" name="Gene">
        <title>Nucleotide sequence of the Bacillus subtilis trpE and trpD genes.</title>
        <authorList>
            <person name="Band L."/>
            <person name="Shimotsu H."/>
            <person name="Henner D.J."/>
        </authorList>
    </citation>
    <scope>NUCLEOTIDE SEQUENCE [GENOMIC DNA]</scope>
</reference>
<reference key="3">
    <citation type="journal article" date="1997" name="Nature">
        <title>The complete genome sequence of the Gram-positive bacterium Bacillus subtilis.</title>
        <authorList>
            <person name="Kunst F."/>
            <person name="Ogasawara N."/>
            <person name="Moszer I."/>
            <person name="Albertini A.M."/>
            <person name="Alloni G."/>
            <person name="Azevedo V."/>
            <person name="Bertero M.G."/>
            <person name="Bessieres P."/>
            <person name="Bolotin A."/>
            <person name="Borchert S."/>
            <person name="Borriss R."/>
            <person name="Boursier L."/>
            <person name="Brans A."/>
            <person name="Braun M."/>
            <person name="Brignell S.C."/>
            <person name="Bron S."/>
            <person name="Brouillet S."/>
            <person name="Bruschi C.V."/>
            <person name="Caldwell B."/>
            <person name="Capuano V."/>
            <person name="Carter N.M."/>
            <person name="Choi S.-K."/>
            <person name="Codani J.-J."/>
            <person name="Connerton I.F."/>
            <person name="Cummings N.J."/>
            <person name="Daniel R.A."/>
            <person name="Denizot F."/>
            <person name="Devine K.M."/>
            <person name="Duesterhoeft A."/>
            <person name="Ehrlich S.D."/>
            <person name="Emmerson P.T."/>
            <person name="Entian K.-D."/>
            <person name="Errington J."/>
            <person name="Fabret C."/>
            <person name="Ferrari E."/>
            <person name="Foulger D."/>
            <person name="Fritz C."/>
            <person name="Fujita M."/>
            <person name="Fujita Y."/>
            <person name="Fuma S."/>
            <person name="Galizzi A."/>
            <person name="Galleron N."/>
            <person name="Ghim S.-Y."/>
            <person name="Glaser P."/>
            <person name="Goffeau A."/>
            <person name="Golightly E.J."/>
            <person name="Grandi G."/>
            <person name="Guiseppi G."/>
            <person name="Guy B.J."/>
            <person name="Haga K."/>
            <person name="Haiech J."/>
            <person name="Harwood C.R."/>
            <person name="Henaut A."/>
            <person name="Hilbert H."/>
            <person name="Holsappel S."/>
            <person name="Hosono S."/>
            <person name="Hullo M.-F."/>
            <person name="Itaya M."/>
            <person name="Jones L.-M."/>
            <person name="Joris B."/>
            <person name="Karamata D."/>
            <person name="Kasahara Y."/>
            <person name="Klaerr-Blanchard M."/>
            <person name="Klein C."/>
            <person name="Kobayashi Y."/>
            <person name="Koetter P."/>
            <person name="Koningstein G."/>
            <person name="Krogh S."/>
            <person name="Kumano M."/>
            <person name="Kurita K."/>
            <person name="Lapidus A."/>
            <person name="Lardinois S."/>
            <person name="Lauber J."/>
            <person name="Lazarevic V."/>
            <person name="Lee S.-M."/>
            <person name="Levine A."/>
            <person name="Liu H."/>
            <person name="Masuda S."/>
            <person name="Mauel C."/>
            <person name="Medigue C."/>
            <person name="Medina N."/>
            <person name="Mellado R.P."/>
            <person name="Mizuno M."/>
            <person name="Moestl D."/>
            <person name="Nakai S."/>
            <person name="Noback M."/>
            <person name="Noone D."/>
            <person name="O'Reilly M."/>
            <person name="Ogawa K."/>
            <person name="Ogiwara A."/>
            <person name="Oudega B."/>
            <person name="Park S.-H."/>
            <person name="Parro V."/>
            <person name="Pohl T.M."/>
            <person name="Portetelle D."/>
            <person name="Porwollik S."/>
            <person name="Prescott A.M."/>
            <person name="Presecan E."/>
            <person name="Pujic P."/>
            <person name="Purnelle B."/>
            <person name="Rapoport G."/>
            <person name="Rey M."/>
            <person name="Reynolds S."/>
            <person name="Rieger M."/>
            <person name="Rivolta C."/>
            <person name="Rocha E."/>
            <person name="Roche B."/>
            <person name="Rose M."/>
            <person name="Sadaie Y."/>
            <person name="Sato T."/>
            <person name="Scanlan E."/>
            <person name="Schleich S."/>
            <person name="Schroeter R."/>
            <person name="Scoffone F."/>
            <person name="Sekiguchi J."/>
            <person name="Sekowska A."/>
            <person name="Seror S.J."/>
            <person name="Serror P."/>
            <person name="Shin B.-S."/>
            <person name="Soldo B."/>
            <person name="Sorokin A."/>
            <person name="Tacconi E."/>
            <person name="Takagi T."/>
            <person name="Takahashi H."/>
            <person name="Takemaru K."/>
            <person name="Takeuchi M."/>
            <person name="Tamakoshi A."/>
            <person name="Tanaka T."/>
            <person name="Terpstra P."/>
            <person name="Tognoni A."/>
            <person name="Tosato V."/>
            <person name="Uchiyama S."/>
            <person name="Vandenbol M."/>
            <person name="Vannier F."/>
            <person name="Vassarotti A."/>
            <person name="Viari A."/>
            <person name="Wambutt R."/>
            <person name="Wedler E."/>
            <person name="Wedler H."/>
            <person name="Weitzenegger T."/>
            <person name="Winters P."/>
            <person name="Wipat A."/>
            <person name="Yamamoto H."/>
            <person name="Yamane K."/>
            <person name="Yasumoto K."/>
            <person name="Yata K."/>
            <person name="Yoshida K."/>
            <person name="Yoshikawa H.-F."/>
            <person name="Zumstein E."/>
            <person name="Yoshikawa H."/>
            <person name="Danchin A."/>
        </authorList>
    </citation>
    <scope>NUCLEOTIDE SEQUENCE [LARGE SCALE GENOMIC DNA]</scope>
    <source>
        <strain>168</strain>
    </source>
</reference>
<reference key="4">
    <citation type="journal article" date="1999" name="Genome Res.">
        <title>Detecting and analyzing DNA sequencing errors: toward a higher quality of the Bacillus subtilis genome sequence.</title>
        <authorList>
            <person name="Medigue C."/>
            <person name="Rose M."/>
            <person name="Viari A."/>
            <person name="Danchin A."/>
        </authorList>
    </citation>
    <scope>SEQUENCE REVISION</scope>
</reference>
<organism>
    <name type="scientific">Bacillus subtilis (strain 168)</name>
    <dbReference type="NCBI Taxonomy" id="224308"/>
    <lineage>
        <taxon>Bacteria</taxon>
        <taxon>Bacillati</taxon>
        <taxon>Bacillota</taxon>
        <taxon>Bacilli</taxon>
        <taxon>Bacillales</taxon>
        <taxon>Bacillaceae</taxon>
        <taxon>Bacillus</taxon>
    </lineage>
</organism>
<evidence type="ECO:0000255" key="1">
    <source>
        <dbReference type="HAMAP-Rule" id="MF_00211"/>
    </source>
</evidence>
<evidence type="ECO:0000305" key="2"/>
<feature type="chain" id="PRO_0000154430" description="Anthranilate phosphoribosyltransferase">
    <location>
        <begin position="1"/>
        <end position="338"/>
    </location>
</feature>
<feature type="binding site" evidence="1">
    <location>
        <position position="78"/>
    </location>
    <ligand>
        <name>5-phospho-alpha-D-ribose 1-diphosphate</name>
        <dbReference type="ChEBI" id="CHEBI:58017"/>
    </ligand>
</feature>
<feature type="binding site" evidence="1">
    <location>
        <position position="78"/>
    </location>
    <ligand>
        <name>anthranilate</name>
        <dbReference type="ChEBI" id="CHEBI:16567"/>
        <label>1</label>
    </ligand>
</feature>
<feature type="binding site" evidence="1">
    <location>
        <begin position="81"/>
        <end position="82"/>
    </location>
    <ligand>
        <name>5-phospho-alpha-D-ribose 1-diphosphate</name>
        <dbReference type="ChEBI" id="CHEBI:58017"/>
    </ligand>
</feature>
<feature type="binding site" evidence="1">
    <location>
        <position position="86"/>
    </location>
    <ligand>
        <name>5-phospho-alpha-D-ribose 1-diphosphate</name>
        <dbReference type="ChEBI" id="CHEBI:58017"/>
    </ligand>
</feature>
<feature type="binding site" evidence="1">
    <location>
        <begin position="88"/>
        <end position="91"/>
    </location>
    <ligand>
        <name>5-phospho-alpha-D-ribose 1-diphosphate</name>
        <dbReference type="ChEBI" id="CHEBI:58017"/>
    </ligand>
</feature>
<feature type="binding site" evidence="1">
    <location>
        <position position="90"/>
    </location>
    <ligand>
        <name>Mg(2+)</name>
        <dbReference type="ChEBI" id="CHEBI:18420"/>
        <label>1</label>
    </ligand>
</feature>
<feature type="binding site" evidence="1">
    <location>
        <begin position="106"/>
        <end position="114"/>
    </location>
    <ligand>
        <name>5-phospho-alpha-D-ribose 1-diphosphate</name>
        <dbReference type="ChEBI" id="CHEBI:58017"/>
    </ligand>
</feature>
<feature type="binding site" evidence="1">
    <location>
        <position position="109"/>
    </location>
    <ligand>
        <name>anthranilate</name>
        <dbReference type="ChEBI" id="CHEBI:16567"/>
        <label>1</label>
    </ligand>
</feature>
<feature type="binding site" evidence="1">
    <location>
        <position position="118"/>
    </location>
    <ligand>
        <name>5-phospho-alpha-D-ribose 1-diphosphate</name>
        <dbReference type="ChEBI" id="CHEBI:58017"/>
    </ligand>
</feature>
<feature type="binding site" evidence="1">
    <location>
        <position position="164"/>
    </location>
    <ligand>
        <name>anthranilate</name>
        <dbReference type="ChEBI" id="CHEBI:16567"/>
        <label>2</label>
    </ligand>
</feature>
<feature type="binding site" evidence="1">
    <location>
        <position position="223"/>
    </location>
    <ligand>
        <name>Mg(2+)</name>
        <dbReference type="ChEBI" id="CHEBI:18420"/>
        <label>2</label>
    </ligand>
</feature>
<feature type="binding site" evidence="1">
    <location>
        <position position="224"/>
    </location>
    <ligand>
        <name>Mg(2+)</name>
        <dbReference type="ChEBI" id="CHEBI:18420"/>
        <label>1</label>
    </ligand>
</feature>
<feature type="binding site" evidence="1">
    <location>
        <position position="224"/>
    </location>
    <ligand>
        <name>Mg(2+)</name>
        <dbReference type="ChEBI" id="CHEBI:18420"/>
        <label>2</label>
    </ligand>
</feature>
<feature type="sequence conflict" description="In Ref. 1; AAA22866 and 2; AAA20863." evidence="2" ref="1 2">
    <original>A</original>
    <variation>P</variation>
    <location>
        <position position="92"/>
    </location>
</feature>
<feature type="sequence conflict" description="In Ref. 1; AAA22866 and 2; AAA20863." evidence="2" ref="1 2">
    <original>RQVIGV</original>
    <variation>SGDWG</variation>
    <location>
        <begin position="187"/>
        <end position="192"/>
    </location>
</feature>
<name>TRPD_BACSU</name>
<gene>
    <name evidence="1" type="primary">trpD</name>
    <name type="ordered locus">BSU22670</name>
</gene>
<accession>P03947</accession>
<dbReference type="EC" id="2.4.2.18" evidence="1"/>
<dbReference type="EMBL" id="K01391">
    <property type="protein sequence ID" value="AAA22866.1"/>
    <property type="molecule type" value="Genomic_DNA"/>
</dbReference>
<dbReference type="EMBL" id="M80245">
    <property type="protein sequence ID" value="AAA20863.1"/>
    <property type="molecule type" value="Genomic_DNA"/>
</dbReference>
<dbReference type="EMBL" id="AL009126">
    <property type="protein sequence ID" value="CAB14183.2"/>
    <property type="molecule type" value="Genomic_DNA"/>
</dbReference>
<dbReference type="PIR" id="A00586">
    <property type="entry name" value="NPBS"/>
</dbReference>
<dbReference type="RefSeq" id="NP_390148.2">
    <property type="nucleotide sequence ID" value="NC_000964.3"/>
</dbReference>
<dbReference type="RefSeq" id="WP_003245959.1">
    <property type="nucleotide sequence ID" value="NZ_OZ025638.1"/>
</dbReference>
<dbReference type="SMR" id="P03947"/>
<dbReference type="FunCoup" id="P03947">
    <property type="interactions" value="617"/>
</dbReference>
<dbReference type="STRING" id="224308.BSU22670"/>
<dbReference type="PaxDb" id="224308-BSU22670"/>
<dbReference type="EnsemblBacteria" id="CAB14183">
    <property type="protein sequence ID" value="CAB14183"/>
    <property type="gene ID" value="BSU_22670"/>
</dbReference>
<dbReference type="GeneID" id="939007"/>
<dbReference type="KEGG" id="bsu:BSU22670"/>
<dbReference type="eggNOG" id="COG0547">
    <property type="taxonomic scope" value="Bacteria"/>
</dbReference>
<dbReference type="InParanoid" id="P03947"/>
<dbReference type="OrthoDB" id="9806430at2"/>
<dbReference type="PhylomeDB" id="P03947"/>
<dbReference type="BioCyc" id="BSUB:BSU22670-MONOMER"/>
<dbReference type="UniPathway" id="UPA00035">
    <property type="reaction ID" value="UER00041"/>
</dbReference>
<dbReference type="Proteomes" id="UP000001570">
    <property type="component" value="Chromosome"/>
</dbReference>
<dbReference type="GO" id="GO:0005829">
    <property type="term" value="C:cytosol"/>
    <property type="evidence" value="ECO:0000318"/>
    <property type="project" value="GO_Central"/>
</dbReference>
<dbReference type="GO" id="GO:0004048">
    <property type="term" value="F:anthranilate phosphoribosyltransferase activity"/>
    <property type="evidence" value="ECO:0007669"/>
    <property type="project" value="UniProtKB-UniRule"/>
</dbReference>
<dbReference type="GO" id="GO:0000287">
    <property type="term" value="F:magnesium ion binding"/>
    <property type="evidence" value="ECO:0007669"/>
    <property type="project" value="UniProtKB-UniRule"/>
</dbReference>
<dbReference type="GO" id="GO:0000162">
    <property type="term" value="P:L-tryptophan biosynthetic process"/>
    <property type="evidence" value="ECO:0000318"/>
    <property type="project" value="GO_Central"/>
</dbReference>
<dbReference type="FunFam" id="3.40.1030.10:FF:000002">
    <property type="entry name" value="Anthranilate phosphoribosyltransferase"/>
    <property type="match status" value="1"/>
</dbReference>
<dbReference type="Gene3D" id="3.40.1030.10">
    <property type="entry name" value="Nucleoside phosphorylase/phosphoribosyltransferase catalytic domain"/>
    <property type="match status" value="1"/>
</dbReference>
<dbReference type="Gene3D" id="1.20.970.10">
    <property type="entry name" value="Transferase, Pyrimidine Nucleoside Phosphorylase, Chain C"/>
    <property type="match status" value="1"/>
</dbReference>
<dbReference type="HAMAP" id="MF_00211">
    <property type="entry name" value="TrpD"/>
    <property type="match status" value="1"/>
</dbReference>
<dbReference type="InterPro" id="IPR005940">
    <property type="entry name" value="Anthranilate_Pribosyl_Tfrase"/>
</dbReference>
<dbReference type="InterPro" id="IPR000312">
    <property type="entry name" value="Glycosyl_Trfase_fam3"/>
</dbReference>
<dbReference type="InterPro" id="IPR017459">
    <property type="entry name" value="Glycosyl_Trfase_fam3_N_dom"/>
</dbReference>
<dbReference type="InterPro" id="IPR036320">
    <property type="entry name" value="Glycosyl_Trfase_fam3_N_dom_sf"/>
</dbReference>
<dbReference type="InterPro" id="IPR035902">
    <property type="entry name" value="Nuc_phospho_transferase"/>
</dbReference>
<dbReference type="NCBIfam" id="TIGR01245">
    <property type="entry name" value="trpD"/>
    <property type="match status" value="1"/>
</dbReference>
<dbReference type="PANTHER" id="PTHR43285">
    <property type="entry name" value="ANTHRANILATE PHOSPHORIBOSYLTRANSFERASE"/>
    <property type="match status" value="1"/>
</dbReference>
<dbReference type="PANTHER" id="PTHR43285:SF2">
    <property type="entry name" value="ANTHRANILATE PHOSPHORIBOSYLTRANSFERASE"/>
    <property type="match status" value="1"/>
</dbReference>
<dbReference type="Pfam" id="PF02885">
    <property type="entry name" value="Glycos_trans_3N"/>
    <property type="match status" value="1"/>
</dbReference>
<dbReference type="Pfam" id="PF00591">
    <property type="entry name" value="Glycos_transf_3"/>
    <property type="match status" value="1"/>
</dbReference>
<dbReference type="SUPFAM" id="SSF52418">
    <property type="entry name" value="Nucleoside phosphorylase/phosphoribosyltransferase catalytic domain"/>
    <property type="match status" value="1"/>
</dbReference>
<dbReference type="SUPFAM" id="SSF47648">
    <property type="entry name" value="Nucleoside phosphorylase/phosphoribosyltransferase N-terminal domain"/>
    <property type="match status" value="1"/>
</dbReference>
<protein>
    <recommendedName>
        <fullName evidence="1">Anthranilate phosphoribosyltransferase</fullName>
        <ecNumber evidence="1">2.4.2.18</ecNumber>
    </recommendedName>
</protein>